<accession>A2T3M1</accession>
<organismHost>
    <name type="scientific">Bos taurus</name>
    <name type="common">Bovine</name>
    <dbReference type="NCBI Taxonomy" id="9913"/>
</organismHost>
<feature type="chain" id="PRO_0000368092" description="Outer capsid protein VP4" evidence="1">
    <location>
        <begin position="1"/>
        <end position="776"/>
    </location>
</feature>
<feature type="chain" id="PRO_0000368093" description="Outer capsid protein VP8*" evidence="1">
    <location>
        <begin position="1"/>
        <end position="231"/>
    </location>
</feature>
<feature type="chain" id="PRO_0000368094" description="Outer capsid protein VP5*" evidence="1">
    <location>
        <begin position="248"/>
        <end position="776"/>
    </location>
</feature>
<feature type="region of interest" description="Spike head" evidence="1">
    <location>
        <begin position="65"/>
        <end position="224"/>
    </location>
</feature>
<feature type="region of interest" description="Spike body and stalk (antigen domain)" evidence="1">
    <location>
        <begin position="248"/>
        <end position="479"/>
    </location>
</feature>
<feature type="region of interest" description="Hydrophobic; possible role in virus entry into host cell" evidence="1">
    <location>
        <begin position="389"/>
        <end position="409"/>
    </location>
</feature>
<feature type="region of interest" description="Spike foot" evidence="1">
    <location>
        <begin position="510"/>
        <end position="776"/>
    </location>
</feature>
<feature type="coiled-coil region" evidence="1">
    <location>
        <begin position="484"/>
        <end position="518"/>
    </location>
</feature>
<feature type="short sequence motif" description="DGE motif; interaction with ITGA2/ITGB1 heterodimer" evidence="1">
    <location>
        <begin position="308"/>
        <end position="310"/>
    </location>
</feature>
<feature type="short sequence motif" description="YGL motif; interaction with ITGA4" evidence="1">
    <location>
        <begin position="448"/>
        <end position="450"/>
    </location>
</feature>
<feature type="short sequence motif" description="KID motif; interaction with HSPA8" evidence="1">
    <location>
        <begin position="644"/>
        <end position="646"/>
    </location>
</feature>
<feature type="site" description="Binding to sialic acid" evidence="1">
    <location>
        <position position="101"/>
    </location>
</feature>
<feature type="site" description="Binding to sialic acid" evidence="1">
    <location>
        <position position="190"/>
    </location>
</feature>
<feature type="site" description="Cleavage" evidence="1">
    <location>
        <begin position="231"/>
        <end position="232"/>
    </location>
</feature>
<feature type="site" description="Cleavage" evidence="1">
    <location>
        <begin position="241"/>
        <end position="242"/>
    </location>
</feature>
<feature type="site" description="Cleavage; associated with enhancement of infectivity" evidence="1">
    <location>
        <begin position="247"/>
        <end position="248"/>
    </location>
</feature>
<feature type="disulfide bond" evidence="1">
    <location>
        <begin position="203"/>
        <end position="216"/>
    </location>
</feature>
<feature type="disulfide bond" evidence="1">
    <location>
        <begin position="318"/>
        <end position="380"/>
    </location>
</feature>
<evidence type="ECO:0000255" key="1">
    <source>
        <dbReference type="HAMAP-Rule" id="MF_04132"/>
    </source>
</evidence>
<dbReference type="EMBL" id="DQ838596">
    <property type="protein sequence ID" value="ABG75770.1"/>
    <property type="molecule type" value="Genomic_RNA"/>
</dbReference>
<dbReference type="SMR" id="A2T3M1"/>
<dbReference type="GO" id="GO:0044172">
    <property type="term" value="C:host cell endoplasmic reticulum-Golgi intermediate compartment"/>
    <property type="evidence" value="ECO:0007669"/>
    <property type="project" value="UniProtKB-SubCell"/>
</dbReference>
<dbReference type="GO" id="GO:0020002">
    <property type="term" value="C:host cell plasma membrane"/>
    <property type="evidence" value="ECO:0007669"/>
    <property type="project" value="UniProtKB-SubCell"/>
</dbReference>
<dbReference type="GO" id="GO:0044168">
    <property type="term" value="C:host cell rough endoplasmic reticulum"/>
    <property type="evidence" value="ECO:0007669"/>
    <property type="project" value="UniProtKB-SubCell"/>
</dbReference>
<dbReference type="GO" id="GO:0044163">
    <property type="term" value="C:host cytoskeleton"/>
    <property type="evidence" value="ECO:0007669"/>
    <property type="project" value="UniProtKB-SubCell"/>
</dbReference>
<dbReference type="GO" id="GO:0016020">
    <property type="term" value="C:membrane"/>
    <property type="evidence" value="ECO:0007669"/>
    <property type="project" value="UniProtKB-KW"/>
</dbReference>
<dbReference type="GO" id="GO:0039624">
    <property type="term" value="C:viral outer capsid"/>
    <property type="evidence" value="ECO:0007669"/>
    <property type="project" value="UniProtKB-UniRule"/>
</dbReference>
<dbReference type="GO" id="GO:0039665">
    <property type="term" value="P:permeabilization of host organelle membrane involved in viral entry into host cell"/>
    <property type="evidence" value="ECO:0007669"/>
    <property type="project" value="UniProtKB-UniRule"/>
</dbReference>
<dbReference type="GO" id="GO:0019062">
    <property type="term" value="P:virion attachment to host cell"/>
    <property type="evidence" value="ECO:0007669"/>
    <property type="project" value="UniProtKB-UniRule"/>
</dbReference>
<dbReference type="Gene3D" id="1.20.5.170">
    <property type="match status" value="1"/>
</dbReference>
<dbReference type="Gene3D" id="2.60.120.200">
    <property type="match status" value="1"/>
</dbReference>
<dbReference type="HAMAP" id="MF_04132">
    <property type="entry name" value="Rota_A_VP4"/>
    <property type="match status" value="1"/>
</dbReference>
<dbReference type="HAMAP" id="MF_04125">
    <property type="entry name" value="Rota_VP4"/>
    <property type="match status" value="1"/>
</dbReference>
<dbReference type="InterPro" id="IPR013320">
    <property type="entry name" value="ConA-like_dom_sf"/>
</dbReference>
<dbReference type="InterPro" id="IPR042546">
    <property type="entry name" value="Rota_A_VP4"/>
</dbReference>
<dbReference type="InterPro" id="IPR035330">
    <property type="entry name" value="Rota_VP4_MID"/>
</dbReference>
<dbReference type="InterPro" id="IPR038017">
    <property type="entry name" value="Rota_VP4_MID_sf"/>
</dbReference>
<dbReference type="InterPro" id="IPR000416">
    <property type="entry name" value="VP4_concanavalin-like"/>
</dbReference>
<dbReference type="InterPro" id="IPR035329">
    <property type="entry name" value="VP4_helical"/>
</dbReference>
<dbReference type="Pfam" id="PF17477">
    <property type="entry name" value="Rota_VP4_MID"/>
    <property type="match status" value="1"/>
</dbReference>
<dbReference type="Pfam" id="PF00426">
    <property type="entry name" value="VP4_haemagglut"/>
    <property type="match status" value="1"/>
</dbReference>
<dbReference type="Pfam" id="PF17478">
    <property type="entry name" value="VP4_helical"/>
    <property type="match status" value="1"/>
</dbReference>
<dbReference type="SUPFAM" id="SSF49899">
    <property type="entry name" value="Concanavalin A-like lectins/glucanases"/>
    <property type="match status" value="1"/>
</dbReference>
<dbReference type="SUPFAM" id="SSF111379">
    <property type="entry name" value="VP4 membrane interaction domain"/>
    <property type="match status" value="1"/>
</dbReference>
<organism>
    <name type="scientific">Rotavirus A (isolate RVA/Cow/South/Africa/Offal agent/1965/G8P6[1])</name>
    <name type="common">RV-A</name>
    <dbReference type="NCBI Taxonomy" id="578837"/>
    <lineage>
        <taxon>Viruses</taxon>
        <taxon>Riboviria</taxon>
        <taxon>Orthornavirae</taxon>
        <taxon>Duplornaviricota</taxon>
        <taxon>Resentoviricetes</taxon>
        <taxon>Reovirales</taxon>
        <taxon>Sedoreoviridae</taxon>
        <taxon>Rotavirus</taxon>
        <taxon>Rotavirus A</taxon>
    </lineage>
</organism>
<reference key="1">
    <citation type="journal article" date="2007" name="Virology">
        <title>Genome heterogeneity of SA11 rotavirus due to reassortment with 'O' agent.</title>
        <authorList>
            <person name="Small C."/>
            <person name="Barro M."/>
            <person name="Brown T.L."/>
            <person name="Patton J.T."/>
        </authorList>
    </citation>
    <scope>NUCLEOTIDE SEQUENCE [GENOMIC RNA]</scope>
</reference>
<name>VP4_ROTAP</name>
<proteinExistence type="inferred from homology"/>
<comment type="function">
    <molecule>Outer capsid protein VP4</molecule>
    <text evidence="1">Spike-forming protein that mediates virion attachment to the host epithelial cell receptors and plays a major role in cell penetration, determination of host range restriction and virulence. Rotavirus attachment and entry into the host cell probably involves multiple sequential contacts between the outer capsid proteins VP4 and VP7, and the cell receptors. It is subsequently lost, together with VP7, following virus entry into the host cell. Following entry into the host cell, low intracellular or intravesicular Ca(2+) concentration probably causes the calcium-stabilized VP7 trimers to dissociate from the virion. This step is probably necessary for the membrane-disrupting entry step and the release of VP4, which is locked onto the virion by VP7. During the virus exit from the host cell, VP4 seems to be required to target the newly formed virions to the host cell lipid rafts.</text>
</comment>
<comment type="function">
    <molecule>Outer capsid protein VP5*</molecule>
    <text evidence="1">Forms the spike 'foot' and 'body' and acts as a membrane permeabilization protein that mediates release of viral particles from endosomal compartments into the cytoplasm. During entry, the part of VP5* that protrudes from the virus folds back on itself and reorganizes from a local dimer to a trimer. This reorganization may be linked to membrane penetration by exposing VP5* hydrophobic region. In integrin-dependent strains, VP5* targets the integrin heterodimer ITGA2/ITGB1 for cell attachment.</text>
</comment>
<comment type="function">
    <molecule>Outer capsid protein VP8*</molecule>
    <text evidence="1">Forms the head of the spikes and mediates the recognition of specific host cell surface glycans. It is the viral hemagglutinin and an important target of neutralizing antibodies. In sialic acid-dependent strains, VP8* binds to host cell sialic acid, most probably a ganglioside, providing the initial contact. In some other strains, VP8* mediates the attachment to histo-blood group antigens (HBGAs) for viral entry.</text>
</comment>
<comment type="subunit">
    <molecule>Outer capsid protein VP4</molecule>
    <text evidence="1">Homotrimer. VP4 adopts a dimeric appearance above the capsid surface, while forming a trimeric base anchored inside the capsid layer. Only hints of the third molecule are observed above the capsid surface. It probably performs a series of molecular rearrangements during viral entry. Prior to trypsin cleavage, it is flexible. The priming trypsin cleavage triggers its rearrangement into rigid spikes with approximate two-fold symmetry of their protruding parts. After an unknown second triggering event, cleaved VP4 may undergo another rearrangement, in which two VP5* subunits fold back on themselves and join a third subunit to form a tightly associated trimer, shaped like a folded umbrella. Interacts with VP6. Interacts with VP7.</text>
</comment>
<comment type="subunit">
    <molecule>Outer capsid protein VP5*</molecule>
    <text evidence="1">Homotrimer. The trimer is coiled-coil stabilized by its C-terminus, however, its N-terminus, known as antigen domain or 'body', seems to be flexible allowing it to self-associate either as a dimer or a trimer.</text>
</comment>
<comment type="subcellular location">
    <molecule>Outer capsid protein VP4</molecule>
    <subcellularLocation>
        <location evidence="1">Virion</location>
    </subcellularLocation>
    <subcellularLocation>
        <location evidence="1">Host rough endoplasmic reticulum</location>
    </subcellularLocation>
    <subcellularLocation>
        <location evidence="1">Host cell membrane</location>
    </subcellularLocation>
    <subcellularLocation>
        <location evidence="1">Host cytoplasm</location>
        <location evidence="1">Host cytoskeleton</location>
    </subcellularLocation>
    <subcellularLocation>
        <location evidence="1">Host endoplasmic reticulum-Golgi intermediate compartment</location>
    </subcellularLocation>
    <text evidence="1">The outer layer contains 180 copies of VP4, grouped as 60 dimers. Immature double-layered particles assembled in the cytoplasm bud across the membrane of the endoplasmic reticulum, acquiring during this process a transient lipid membrane that is modified with the ER resident viral glycoproteins NSP4 and VP7; these enveloped particles also contain VP4. As the particles move towards the interior of the ER cisternae, the transient lipid membrane and the non-structural protein NSP4 are lost, while the virus surface proteins VP4 and VP7 rearrange to form the outermost virus protein layer, yielding mature infectious triple-layered particles. VP4 also seems to associate with lipid rafts of the host cell membrane probably for the exit of the virus from the infected cell by an alternate pathway.</text>
</comment>
<comment type="subcellular location">
    <molecule>Outer capsid protein VP8*</molecule>
    <subcellularLocation>
        <location evidence="1">Virion</location>
    </subcellularLocation>
    <text evidence="1">Outer capsid protein.</text>
</comment>
<comment type="subcellular location">
    <molecule>Outer capsid protein VP5*</molecule>
    <subcellularLocation>
        <location evidence="1">Virion</location>
    </subcellularLocation>
    <text evidence="1">Outer capsid protein.</text>
</comment>
<comment type="domain">
    <molecule>Outer capsid protein VP4</molecule>
    <text evidence="1">The VP4 spike is divided into a foot, a stalk and body, and a head.</text>
</comment>
<comment type="PTM">
    <molecule>Outer capsid protein VP4</molecule>
    <text evidence="1">Proteolytic cleavage by trypsin results in activation of VP4 functions and greatly increases infectivity. The penetration into the host cell is dependent on trypsin treatment of VP4. It produces two peptides, VP5* and VP8* that remain associated with the virion. Cleavage of VP4 by trypsin probably occurs in vivo in the lumen of the intestine prior to infection of enterocytes. Trypsin seems to be incorporated into the three-layered viral particles but remains inactive as long as the viral outer capsid is intact and would only be activated upon the solubilization of the latter.</text>
</comment>
<comment type="miscellaneous">
    <text evidence="1">In group A rotaviruses, VP4 defines the P serotype.</text>
</comment>
<comment type="miscellaneous">
    <text evidence="1">Some rotavirus strains are neuraminidase-sensitive and require sialic acid to attach to the cell surface. Some rotavirus strains are integrin-dependent. Some rotavirus strains depend on ganglioside for their entry into the host cell. Hsp70 also seems to be involved in the entry of some strains.</text>
</comment>
<comment type="miscellaneous">
    <text evidence="1">This strain probably uses sialic acid to attach to the host cell.</text>
</comment>
<comment type="similarity">
    <text evidence="1">Belongs to the rotavirus VP4 family.</text>
</comment>
<protein>
    <recommendedName>
        <fullName evidence="1">Outer capsid protein VP4</fullName>
    </recommendedName>
    <alternativeName>
        <fullName evidence="1">Hemagglutinin</fullName>
    </alternativeName>
    <component>
        <recommendedName>
            <fullName evidence="1">Outer capsid protein VP8*</fullName>
        </recommendedName>
    </component>
    <component>
        <recommendedName>
            <fullName evidence="1">Outer capsid protein VP5*</fullName>
        </recommendedName>
    </component>
</protein>
<sequence>MASLIYRQLLTNSYTVELSDEIQEIGSTKTQNVTVNPGPFAQTNYAPVNWGPGETNDSTTVEPVLDGPYQPTTFNPPVSYWMLLAPTNAGVVVEGTNNTNRWLATILIEPNVQQVERTYTLFGQQVQVTVSNDSQTKWKFVDLSKQTQDGNYSQHGSLLSTPKLYGVMKHGGKIYTYNGETPNANTGYYSTTNFDTVNMTAYCDFYIIPLAQEAKCTEYINNGLPPIQNTRNIVPVSIVSRNIVYTRAQPNQDIVVSKTSLWKEMQYNRDIVIRFKFANSIIKSGGLGYKWSEVSFKPANYQYTYTRDGEEVTAHTTCSVNGVNDFNYNGGSLPTDFVISKYEVIKENSFVYIDYWDDSQAFRNMVYVRSLAADLNSVMCTGGDYSFALPVGNYPVMTGGAVSLHSAGVTLSTQFTDFVSLNSLRFRFRLSVEEPPFSILRTRVSGLYGLPAAKPNNSQEYYEIAGRFSLISLVPLNDDYQTPIMNSVTVRQDLERQLGELRDEFNNLSQQIAMSQLIDLALLPLDMFSMFSGIKSTIDAAKSMATNVMKRFKKSSLANSVSTLTDSLSDAASSISRSASVRSVSSTASAWTEVSNIASDINVTTSSISTQTSTISRRLRLKEMATQTDGMNFDDISAAVLKTKIDKSTQLNTNTLPEIVTEASEKFIPNRAYRVIKDDEVLEASTDGKYFAYKVETFEEIPFDVQKFADLVTDSPVISAIIDFKTLKNLNDNYGISRQQALNLLRSDPRVLREFINQDNPIIRNRIESLIMQCRL</sequence>
<keyword id="KW-0167">Capsid protein</keyword>
<keyword id="KW-0175">Coiled coil</keyword>
<keyword id="KW-1015">Disulfide bond</keyword>
<keyword id="KW-0348">Hemagglutinin</keyword>
<keyword id="KW-1032">Host cell membrane</keyword>
<keyword id="KW-1035">Host cytoplasm</keyword>
<keyword id="KW-1037">Host cytoskeleton</keyword>
<keyword id="KW-1038">Host endoplasmic reticulum</keyword>
<keyword id="KW-1043">Host membrane</keyword>
<keyword id="KW-0945">Host-virus interaction</keyword>
<keyword id="KW-0472">Membrane</keyword>
<keyword id="KW-1152">Outer capsid protein</keyword>
<keyword id="KW-1161">Viral attachment to host cell</keyword>
<keyword id="KW-1162">Viral penetration into host cytoplasm</keyword>
<keyword id="KW-1173">Viral penetration via permeabilization of host membrane</keyword>
<keyword id="KW-0946">Virion</keyword>
<keyword id="KW-1160">Virus entry into host cell</keyword>